<feature type="chain" id="PRO_0000111745" description="Proline dehydrogenase transcriptional activator">
    <location>
        <begin position="1"/>
        <end position="154"/>
    </location>
</feature>
<feature type="domain" description="HTH asnC-type" evidence="1">
    <location>
        <begin position="5"/>
        <end position="66"/>
    </location>
</feature>
<feature type="DNA-binding region" description="H-T-H motif" evidence="1">
    <location>
        <begin position="24"/>
        <end position="43"/>
    </location>
</feature>
<comment type="function">
    <text>Transcriptional activator of the putA gene in response to proline.</text>
</comment>
<evidence type="ECO:0000255" key="1">
    <source>
        <dbReference type="PROSITE-ProRule" id="PRU00319"/>
    </source>
</evidence>
<sequence length="154" mass="17214">MTDLIDATDRRILHELCANARIPVTELARKVGLSKTPVAARIRAMEEMGLITGYRAMLSPIRLGLIHVTYVEVRLNDTRQKALEQFNAAVREIPEVEECYMIAGGFDYLLKVRSHDIAEYRKIMGEKLSALPHVAATSSYVAMEAVVEQNSPSL</sequence>
<dbReference type="EMBL" id="X78346">
    <property type="protein sequence ID" value="CAA55141.1"/>
    <property type="molecule type" value="Genomic_DNA"/>
</dbReference>
<dbReference type="PIR" id="T28434">
    <property type="entry name" value="T28434"/>
</dbReference>
<dbReference type="RefSeq" id="WP_013068357.1">
    <property type="nucleotide sequence ID" value="NZ_VIBE01000006.1"/>
</dbReference>
<dbReference type="SMR" id="Q52710"/>
<dbReference type="OMA" id="VISCHVV"/>
<dbReference type="GO" id="GO:0005829">
    <property type="term" value="C:cytosol"/>
    <property type="evidence" value="ECO:0007669"/>
    <property type="project" value="TreeGrafter"/>
</dbReference>
<dbReference type="GO" id="GO:0043565">
    <property type="term" value="F:sequence-specific DNA binding"/>
    <property type="evidence" value="ECO:0007669"/>
    <property type="project" value="InterPro"/>
</dbReference>
<dbReference type="GO" id="GO:0043200">
    <property type="term" value="P:response to amino acid"/>
    <property type="evidence" value="ECO:0007669"/>
    <property type="project" value="TreeGrafter"/>
</dbReference>
<dbReference type="CDD" id="cd00090">
    <property type="entry name" value="HTH_ARSR"/>
    <property type="match status" value="1"/>
</dbReference>
<dbReference type="Gene3D" id="3.30.70.920">
    <property type="match status" value="1"/>
</dbReference>
<dbReference type="Gene3D" id="1.10.10.10">
    <property type="entry name" value="Winged helix-like DNA-binding domain superfamily/Winged helix DNA-binding domain"/>
    <property type="match status" value="1"/>
</dbReference>
<dbReference type="InterPro" id="IPR011991">
    <property type="entry name" value="ArsR-like_HTH"/>
</dbReference>
<dbReference type="InterPro" id="IPR000485">
    <property type="entry name" value="AsnC-type_HTH_dom"/>
</dbReference>
<dbReference type="InterPro" id="IPR011008">
    <property type="entry name" value="Dimeric_a/b-barrel"/>
</dbReference>
<dbReference type="InterPro" id="IPR019888">
    <property type="entry name" value="Tscrpt_reg_AsnC-like"/>
</dbReference>
<dbReference type="InterPro" id="IPR019887">
    <property type="entry name" value="Tscrpt_reg_AsnC/Lrp_C"/>
</dbReference>
<dbReference type="InterPro" id="IPR019885">
    <property type="entry name" value="Tscrpt_reg_HTH_AsnC-type_CS"/>
</dbReference>
<dbReference type="InterPro" id="IPR036388">
    <property type="entry name" value="WH-like_DNA-bd_sf"/>
</dbReference>
<dbReference type="InterPro" id="IPR036390">
    <property type="entry name" value="WH_DNA-bd_sf"/>
</dbReference>
<dbReference type="PANTHER" id="PTHR30154">
    <property type="entry name" value="LEUCINE-RESPONSIVE REGULATORY PROTEIN"/>
    <property type="match status" value="1"/>
</dbReference>
<dbReference type="PANTHER" id="PTHR30154:SF0">
    <property type="entry name" value="LEUCINE-RESPONSIVE REGULATORY PROTEIN"/>
    <property type="match status" value="1"/>
</dbReference>
<dbReference type="Pfam" id="PF01037">
    <property type="entry name" value="AsnC_trans_reg"/>
    <property type="match status" value="1"/>
</dbReference>
<dbReference type="Pfam" id="PF13404">
    <property type="entry name" value="HTH_AsnC-type"/>
    <property type="match status" value="1"/>
</dbReference>
<dbReference type="PRINTS" id="PR00033">
    <property type="entry name" value="HTHASNC"/>
</dbReference>
<dbReference type="SMART" id="SM00344">
    <property type="entry name" value="HTH_ASNC"/>
    <property type="match status" value="1"/>
</dbReference>
<dbReference type="SUPFAM" id="SSF54909">
    <property type="entry name" value="Dimeric alpha+beta barrel"/>
    <property type="match status" value="1"/>
</dbReference>
<dbReference type="SUPFAM" id="SSF46785">
    <property type="entry name" value="Winged helix' DNA-binding domain"/>
    <property type="match status" value="1"/>
</dbReference>
<dbReference type="PROSITE" id="PS00519">
    <property type="entry name" value="HTH_ASNC_1"/>
    <property type="match status" value="1"/>
</dbReference>
<dbReference type="PROSITE" id="PS50956">
    <property type="entry name" value="HTH_ASNC_2"/>
    <property type="match status" value="1"/>
</dbReference>
<gene>
    <name type="primary">putR</name>
</gene>
<organism>
    <name type="scientific">Rhodobacter capsulatus</name>
    <name type="common">Rhodopseudomonas capsulata</name>
    <dbReference type="NCBI Taxonomy" id="1061"/>
    <lineage>
        <taxon>Bacteria</taxon>
        <taxon>Pseudomonadati</taxon>
        <taxon>Pseudomonadota</taxon>
        <taxon>Alphaproteobacteria</taxon>
        <taxon>Rhodobacterales</taxon>
        <taxon>Rhodobacter group</taxon>
        <taxon>Rhodobacter</taxon>
    </lineage>
</organism>
<keyword id="KW-0010">Activator</keyword>
<keyword id="KW-0238">DNA-binding</keyword>
<keyword id="KW-0804">Transcription</keyword>
<keyword id="KW-0805">Transcription regulation</keyword>
<protein>
    <recommendedName>
        <fullName>Proline dehydrogenase transcriptional activator</fullName>
    </recommendedName>
</protein>
<proteinExistence type="predicted"/>
<reference key="1">
    <citation type="journal article" date="1995" name="J. Bacteriol.">
        <title>Expression of the putA gene encoding proline dehydrogenase from Rhodobacter capsulatus is independent of NtrC regulation but requires an Lrp-like activator protein.</title>
        <authorList>
            <person name="Keuntje B."/>
            <person name="Masepohl B."/>
            <person name="Klipp W."/>
        </authorList>
    </citation>
    <scope>NUCLEOTIDE SEQUENCE [GENOMIC DNA]</scope>
    <source>
        <strain>B10S</strain>
    </source>
</reference>
<accession>Q52710</accession>
<name>PUTR_RHOCA</name>